<evidence type="ECO:0000255" key="1">
    <source>
        <dbReference type="HAMAP-Rule" id="MF_00502"/>
    </source>
</evidence>
<evidence type="ECO:0000305" key="2"/>
<keyword id="KW-1185">Reference proteome</keyword>
<keyword id="KW-0687">Ribonucleoprotein</keyword>
<keyword id="KW-0689">Ribosomal protein</keyword>
<name>RL31B_LACLA</name>
<proteinExistence type="inferred from homology"/>
<protein>
    <recommendedName>
        <fullName evidence="1">Large ribosomal subunit protein bL31B</fullName>
    </recommendedName>
    <alternativeName>
        <fullName evidence="2">50S ribosomal protein L31 type B</fullName>
    </alternativeName>
</protein>
<gene>
    <name evidence="1" type="primary">rpmE2</name>
    <name type="ordered locus">LL1596</name>
    <name type="ORF">L0425</name>
</gene>
<sequence length="81" mass="9336">MKQNIHPNYQPVVFMDTTTGFKFLTGSTKGSKETVEWEDGNTYPLIRVEISSDSHPFYTGRQKFQAADGRIARFEKKYGKQ</sequence>
<dbReference type="EMBL" id="AE005176">
    <property type="protein sequence ID" value="AAK05694.1"/>
    <property type="molecule type" value="Genomic_DNA"/>
</dbReference>
<dbReference type="PIR" id="D86824">
    <property type="entry name" value="D86824"/>
</dbReference>
<dbReference type="RefSeq" id="NP_267752.1">
    <property type="nucleotide sequence ID" value="NC_002662.1"/>
</dbReference>
<dbReference type="RefSeq" id="WP_003130760.1">
    <property type="nucleotide sequence ID" value="NC_002662.1"/>
</dbReference>
<dbReference type="SMR" id="Q9CF85"/>
<dbReference type="PaxDb" id="272623-L0425"/>
<dbReference type="EnsemblBacteria" id="AAK05694">
    <property type="protein sequence ID" value="AAK05694"/>
    <property type="gene ID" value="L0425"/>
</dbReference>
<dbReference type="KEGG" id="lla:L0425"/>
<dbReference type="PATRIC" id="fig|272623.7.peg.1717"/>
<dbReference type="eggNOG" id="COG0254">
    <property type="taxonomic scope" value="Bacteria"/>
</dbReference>
<dbReference type="HOGENOM" id="CLU_114306_2_2_9"/>
<dbReference type="OrthoDB" id="9803251at2"/>
<dbReference type="Proteomes" id="UP000002196">
    <property type="component" value="Chromosome"/>
</dbReference>
<dbReference type="GO" id="GO:1990904">
    <property type="term" value="C:ribonucleoprotein complex"/>
    <property type="evidence" value="ECO:0007669"/>
    <property type="project" value="UniProtKB-KW"/>
</dbReference>
<dbReference type="GO" id="GO:0005840">
    <property type="term" value="C:ribosome"/>
    <property type="evidence" value="ECO:0007669"/>
    <property type="project" value="UniProtKB-KW"/>
</dbReference>
<dbReference type="GO" id="GO:0003735">
    <property type="term" value="F:structural constituent of ribosome"/>
    <property type="evidence" value="ECO:0007669"/>
    <property type="project" value="InterPro"/>
</dbReference>
<dbReference type="GO" id="GO:0006412">
    <property type="term" value="P:translation"/>
    <property type="evidence" value="ECO:0007669"/>
    <property type="project" value="UniProtKB-UniRule"/>
</dbReference>
<dbReference type="Gene3D" id="4.10.830.30">
    <property type="entry name" value="Ribosomal protein L31"/>
    <property type="match status" value="1"/>
</dbReference>
<dbReference type="HAMAP" id="MF_00502">
    <property type="entry name" value="Ribosomal_bL31_2"/>
    <property type="match status" value="1"/>
</dbReference>
<dbReference type="InterPro" id="IPR034704">
    <property type="entry name" value="Ribosomal_bL28/bL31-like_sf"/>
</dbReference>
<dbReference type="InterPro" id="IPR002150">
    <property type="entry name" value="Ribosomal_bL31"/>
</dbReference>
<dbReference type="InterPro" id="IPR027493">
    <property type="entry name" value="Ribosomal_bL31_B"/>
</dbReference>
<dbReference type="InterPro" id="IPR042105">
    <property type="entry name" value="Ribosomal_bL31_sf"/>
</dbReference>
<dbReference type="NCBIfam" id="TIGR00105">
    <property type="entry name" value="L31"/>
    <property type="match status" value="1"/>
</dbReference>
<dbReference type="NCBIfam" id="NF002462">
    <property type="entry name" value="PRK01678.1"/>
    <property type="match status" value="1"/>
</dbReference>
<dbReference type="PANTHER" id="PTHR33280">
    <property type="entry name" value="50S RIBOSOMAL PROTEIN L31, CHLOROPLASTIC"/>
    <property type="match status" value="1"/>
</dbReference>
<dbReference type="PANTHER" id="PTHR33280:SF1">
    <property type="entry name" value="LARGE RIBOSOMAL SUBUNIT PROTEIN BL31C"/>
    <property type="match status" value="1"/>
</dbReference>
<dbReference type="Pfam" id="PF01197">
    <property type="entry name" value="Ribosomal_L31"/>
    <property type="match status" value="1"/>
</dbReference>
<dbReference type="PRINTS" id="PR01249">
    <property type="entry name" value="RIBOSOMALL31"/>
</dbReference>
<dbReference type="SUPFAM" id="SSF143800">
    <property type="entry name" value="L28p-like"/>
    <property type="match status" value="1"/>
</dbReference>
<dbReference type="PROSITE" id="PS01143">
    <property type="entry name" value="RIBOSOMAL_L31"/>
    <property type="match status" value="1"/>
</dbReference>
<accession>Q9CF85</accession>
<feature type="chain" id="PRO_0000173231" description="Large ribosomal subunit protein bL31B">
    <location>
        <begin position="1"/>
        <end position="81"/>
    </location>
</feature>
<comment type="subunit">
    <text evidence="1">Part of the 50S ribosomal subunit.</text>
</comment>
<comment type="similarity">
    <text evidence="1">Belongs to the bacterial ribosomal protein bL31 family. Type B subfamily.</text>
</comment>
<organism>
    <name type="scientific">Lactococcus lactis subsp. lactis (strain IL1403)</name>
    <name type="common">Streptococcus lactis</name>
    <dbReference type="NCBI Taxonomy" id="272623"/>
    <lineage>
        <taxon>Bacteria</taxon>
        <taxon>Bacillati</taxon>
        <taxon>Bacillota</taxon>
        <taxon>Bacilli</taxon>
        <taxon>Lactobacillales</taxon>
        <taxon>Streptococcaceae</taxon>
        <taxon>Lactococcus</taxon>
    </lineage>
</organism>
<reference key="1">
    <citation type="journal article" date="2001" name="Genome Res.">
        <title>The complete genome sequence of the lactic acid bacterium Lactococcus lactis ssp. lactis IL1403.</title>
        <authorList>
            <person name="Bolotin A."/>
            <person name="Wincker P."/>
            <person name="Mauger S."/>
            <person name="Jaillon O."/>
            <person name="Malarme K."/>
            <person name="Weissenbach J."/>
            <person name="Ehrlich S.D."/>
            <person name="Sorokin A."/>
        </authorList>
    </citation>
    <scope>NUCLEOTIDE SEQUENCE [LARGE SCALE GENOMIC DNA]</scope>
    <source>
        <strain>IL1403</strain>
    </source>
</reference>